<reference key="1">
    <citation type="journal article" date="2000" name="Science">
        <title>The genome sequence of Drosophila melanogaster.</title>
        <authorList>
            <person name="Adams M.D."/>
            <person name="Celniker S.E."/>
            <person name="Holt R.A."/>
            <person name="Evans C.A."/>
            <person name="Gocayne J.D."/>
            <person name="Amanatides P.G."/>
            <person name="Scherer S.E."/>
            <person name="Li P.W."/>
            <person name="Hoskins R.A."/>
            <person name="Galle R.F."/>
            <person name="George R.A."/>
            <person name="Lewis S.E."/>
            <person name="Richards S."/>
            <person name="Ashburner M."/>
            <person name="Henderson S.N."/>
            <person name="Sutton G.G."/>
            <person name="Wortman J.R."/>
            <person name="Yandell M.D."/>
            <person name="Zhang Q."/>
            <person name="Chen L.X."/>
            <person name="Brandon R.C."/>
            <person name="Rogers Y.-H.C."/>
            <person name="Blazej R.G."/>
            <person name="Champe M."/>
            <person name="Pfeiffer B.D."/>
            <person name="Wan K.H."/>
            <person name="Doyle C."/>
            <person name="Baxter E.G."/>
            <person name="Helt G."/>
            <person name="Nelson C.R."/>
            <person name="Miklos G.L.G."/>
            <person name="Abril J.F."/>
            <person name="Agbayani A."/>
            <person name="An H.-J."/>
            <person name="Andrews-Pfannkoch C."/>
            <person name="Baldwin D."/>
            <person name="Ballew R.M."/>
            <person name="Basu A."/>
            <person name="Baxendale J."/>
            <person name="Bayraktaroglu L."/>
            <person name="Beasley E.M."/>
            <person name="Beeson K.Y."/>
            <person name="Benos P.V."/>
            <person name="Berman B.P."/>
            <person name="Bhandari D."/>
            <person name="Bolshakov S."/>
            <person name="Borkova D."/>
            <person name="Botchan M.R."/>
            <person name="Bouck J."/>
            <person name="Brokstein P."/>
            <person name="Brottier P."/>
            <person name="Burtis K.C."/>
            <person name="Busam D.A."/>
            <person name="Butler H."/>
            <person name="Cadieu E."/>
            <person name="Center A."/>
            <person name="Chandra I."/>
            <person name="Cherry J.M."/>
            <person name="Cawley S."/>
            <person name="Dahlke C."/>
            <person name="Davenport L.B."/>
            <person name="Davies P."/>
            <person name="de Pablos B."/>
            <person name="Delcher A."/>
            <person name="Deng Z."/>
            <person name="Mays A.D."/>
            <person name="Dew I."/>
            <person name="Dietz S.M."/>
            <person name="Dodson K."/>
            <person name="Doup L.E."/>
            <person name="Downes M."/>
            <person name="Dugan-Rocha S."/>
            <person name="Dunkov B.C."/>
            <person name="Dunn P."/>
            <person name="Durbin K.J."/>
            <person name="Evangelista C.C."/>
            <person name="Ferraz C."/>
            <person name="Ferriera S."/>
            <person name="Fleischmann W."/>
            <person name="Fosler C."/>
            <person name="Gabrielian A.E."/>
            <person name="Garg N.S."/>
            <person name="Gelbart W.M."/>
            <person name="Glasser K."/>
            <person name="Glodek A."/>
            <person name="Gong F."/>
            <person name="Gorrell J.H."/>
            <person name="Gu Z."/>
            <person name="Guan P."/>
            <person name="Harris M."/>
            <person name="Harris N.L."/>
            <person name="Harvey D.A."/>
            <person name="Heiman T.J."/>
            <person name="Hernandez J.R."/>
            <person name="Houck J."/>
            <person name="Hostin D."/>
            <person name="Houston K.A."/>
            <person name="Howland T.J."/>
            <person name="Wei M.-H."/>
            <person name="Ibegwam C."/>
            <person name="Jalali M."/>
            <person name="Kalush F."/>
            <person name="Karpen G.H."/>
            <person name="Ke Z."/>
            <person name="Kennison J.A."/>
            <person name="Ketchum K.A."/>
            <person name="Kimmel B.E."/>
            <person name="Kodira C.D."/>
            <person name="Kraft C.L."/>
            <person name="Kravitz S."/>
            <person name="Kulp D."/>
            <person name="Lai Z."/>
            <person name="Lasko P."/>
            <person name="Lei Y."/>
            <person name="Levitsky A.A."/>
            <person name="Li J.H."/>
            <person name="Li Z."/>
            <person name="Liang Y."/>
            <person name="Lin X."/>
            <person name="Liu X."/>
            <person name="Mattei B."/>
            <person name="McIntosh T.C."/>
            <person name="McLeod M.P."/>
            <person name="McPherson D."/>
            <person name="Merkulov G."/>
            <person name="Milshina N.V."/>
            <person name="Mobarry C."/>
            <person name="Morris J."/>
            <person name="Moshrefi A."/>
            <person name="Mount S.M."/>
            <person name="Moy M."/>
            <person name="Murphy B."/>
            <person name="Murphy L."/>
            <person name="Muzny D.M."/>
            <person name="Nelson D.L."/>
            <person name="Nelson D.R."/>
            <person name="Nelson K.A."/>
            <person name="Nixon K."/>
            <person name="Nusskern D.R."/>
            <person name="Pacleb J.M."/>
            <person name="Palazzolo M."/>
            <person name="Pittman G.S."/>
            <person name="Pan S."/>
            <person name="Pollard J."/>
            <person name="Puri V."/>
            <person name="Reese M.G."/>
            <person name="Reinert K."/>
            <person name="Remington K."/>
            <person name="Saunders R.D.C."/>
            <person name="Scheeler F."/>
            <person name="Shen H."/>
            <person name="Shue B.C."/>
            <person name="Siden-Kiamos I."/>
            <person name="Simpson M."/>
            <person name="Skupski M.P."/>
            <person name="Smith T.J."/>
            <person name="Spier E."/>
            <person name="Spradling A.C."/>
            <person name="Stapleton M."/>
            <person name="Strong R."/>
            <person name="Sun E."/>
            <person name="Svirskas R."/>
            <person name="Tector C."/>
            <person name="Turner R."/>
            <person name="Venter E."/>
            <person name="Wang A.H."/>
            <person name="Wang X."/>
            <person name="Wang Z.-Y."/>
            <person name="Wassarman D.A."/>
            <person name="Weinstock G.M."/>
            <person name="Weissenbach J."/>
            <person name="Williams S.M."/>
            <person name="Woodage T."/>
            <person name="Worley K.C."/>
            <person name="Wu D."/>
            <person name="Yang S."/>
            <person name="Yao Q.A."/>
            <person name="Ye J."/>
            <person name="Yeh R.-F."/>
            <person name="Zaveri J.S."/>
            <person name="Zhan M."/>
            <person name="Zhang G."/>
            <person name="Zhao Q."/>
            <person name="Zheng L."/>
            <person name="Zheng X.H."/>
            <person name="Zhong F.N."/>
            <person name="Zhong W."/>
            <person name="Zhou X."/>
            <person name="Zhu S.C."/>
            <person name="Zhu X."/>
            <person name="Smith H.O."/>
            <person name="Gibbs R.A."/>
            <person name="Myers E.W."/>
            <person name="Rubin G.M."/>
            <person name="Venter J.C."/>
        </authorList>
    </citation>
    <scope>NUCLEOTIDE SEQUENCE [LARGE SCALE GENOMIC DNA]</scope>
    <source>
        <strain>Berkeley</strain>
    </source>
</reference>
<reference key="2">
    <citation type="journal article" date="2002" name="Genome Biol.">
        <title>Annotation of the Drosophila melanogaster euchromatic genome: a systematic review.</title>
        <authorList>
            <person name="Misra S."/>
            <person name="Crosby M.A."/>
            <person name="Mungall C.J."/>
            <person name="Matthews B.B."/>
            <person name="Campbell K.S."/>
            <person name="Hradecky P."/>
            <person name="Huang Y."/>
            <person name="Kaminker J.S."/>
            <person name="Millburn G.H."/>
            <person name="Prochnik S.E."/>
            <person name="Smith C.D."/>
            <person name="Tupy J.L."/>
            <person name="Whitfield E.J."/>
            <person name="Bayraktaroglu L."/>
            <person name="Berman B.P."/>
            <person name="Bettencourt B.R."/>
            <person name="Celniker S.E."/>
            <person name="de Grey A.D.N.J."/>
            <person name="Drysdale R.A."/>
            <person name="Harris N.L."/>
            <person name="Richter J."/>
            <person name="Russo S."/>
            <person name="Schroeder A.J."/>
            <person name="Shu S.Q."/>
            <person name="Stapleton M."/>
            <person name="Yamada C."/>
            <person name="Ashburner M."/>
            <person name="Gelbart W.M."/>
            <person name="Rubin G.M."/>
            <person name="Lewis S.E."/>
        </authorList>
    </citation>
    <scope>GENOME REANNOTATION</scope>
    <source>
        <strain>Berkeley</strain>
    </source>
</reference>
<reference key="3">
    <citation type="journal article" date="2002" name="Genome Biol.">
        <title>A Drosophila full-length cDNA resource.</title>
        <authorList>
            <person name="Stapleton M."/>
            <person name="Carlson J.W."/>
            <person name="Brokstein P."/>
            <person name="Yu C."/>
            <person name="Champe M."/>
            <person name="George R.A."/>
            <person name="Guarin H."/>
            <person name="Kronmiller B."/>
            <person name="Pacleb J.M."/>
            <person name="Park S."/>
            <person name="Wan K.H."/>
            <person name="Rubin G.M."/>
            <person name="Celniker S.E."/>
        </authorList>
    </citation>
    <scope>NUCLEOTIDE SEQUENCE [LARGE SCALE MRNA]</scope>
    <source>
        <strain>Berkeley</strain>
        <tissue>Head</tissue>
    </source>
</reference>
<reference key="4">
    <citation type="submission" date="2008-09" db="EMBL/GenBank/DDBJ databases">
        <authorList>
            <person name="Carlson J."/>
            <person name="Booth B."/>
            <person name="Frise E."/>
            <person name="Park S."/>
            <person name="Wan K."/>
            <person name="Yu C."/>
            <person name="Celniker S."/>
        </authorList>
    </citation>
    <scope>NUCLEOTIDE SEQUENCE [LARGE SCALE MRNA]</scope>
    <source>
        <strain>Berkeley</strain>
    </source>
</reference>
<reference key="5">
    <citation type="journal article" date="2024" name="Nat. Chem. Biol.">
        <title>Mitochondrial matrix RTN4IP1/OPA10 is an oxidoreductase for coenzyme Q synthesis.</title>
        <authorList>
            <person name="Park I."/>
            <person name="Kim K.E."/>
            <person name="Kim J."/>
            <person name="Kim A.K."/>
            <person name="Bae S."/>
            <person name="Jung M."/>
            <person name="Choi J."/>
            <person name="Mishra P.K."/>
            <person name="Kim T.M."/>
            <person name="Kwak C."/>
            <person name="Kang M.G."/>
            <person name="Yoo C.M."/>
            <person name="Mun J.Y."/>
            <person name="Liu K.H."/>
            <person name="Lee K.S."/>
            <person name="Kim J.S."/>
            <person name="Suh J.M."/>
            <person name="Rhee H.W."/>
        </authorList>
    </citation>
    <scope>FUNCTION</scope>
    <scope>PATHWAY</scope>
    <scope>DISRUPTION PHENOTYPE</scope>
</reference>
<organism>
    <name type="scientific">Drosophila melanogaster</name>
    <name type="common">Fruit fly</name>
    <dbReference type="NCBI Taxonomy" id="7227"/>
    <lineage>
        <taxon>Eukaryota</taxon>
        <taxon>Metazoa</taxon>
        <taxon>Ecdysozoa</taxon>
        <taxon>Arthropoda</taxon>
        <taxon>Hexapoda</taxon>
        <taxon>Insecta</taxon>
        <taxon>Pterygota</taxon>
        <taxon>Neoptera</taxon>
        <taxon>Endopterygota</taxon>
        <taxon>Diptera</taxon>
        <taxon>Brachycera</taxon>
        <taxon>Muscomorpha</taxon>
        <taxon>Ephydroidea</taxon>
        <taxon>Drosophilidae</taxon>
        <taxon>Drosophila</taxon>
        <taxon>Sophophora</taxon>
    </lineage>
</organism>
<keyword id="KW-0025">Alternative splicing</keyword>
<keyword id="KW-0496">Mitochondrion</keyword>
<keyword id="KW-0521">NADP</keyword>
<keyword id="KW-0547">Nucleotide-binding</keyword>
<keyword id="KW-0560">Oxidoreductase</keyword>
<keyword id="KW-1185">Reference proteome</keyword>
<keyword id="KW-0809">Transit peptide</keyword>
<keyword id="KW-0831">Ubiquinone biosynthesis</keyword>
<feature type="transit peptide" description="Mitochondrion" evidence="2">
    <location>
        <begin position="1"/>
        <end position="23"/>
    </location>
</feature>
<feature type="chain" id="PRO_0000461949" description="NAD(P)H oxidoreductase RTN4IP1, mitochondrial" evidence="2">
    <location>
        <begin position="24"/>
        <end position="413"/>
    </location>
</feature>
<feature type="domain" description="Enoyl reductase (ER)" evidence="2">
    <location>
        <begin position="61"/>
        <end position="405"/>
    </location>
</feature>
<feature type="region of interest" description="Disordered" evidence="3">
    <location>
        <begin position="27"/>
        <end position="52"/>
    </location>
</feature>
<feature type="compositionally biased region" description="Polar residues" evidence="3">
    <location>
        <begin position="31"/>
        <end position="40"/>
    </location>
</feature>
<feature type="binding site" evidence="1">
    <location>
        <position position="228"/>
    </location>
    <ligand>
        <name>NADPH</name>
        <dbReference type="ChEBI" id="CHEBI:57783"/>
    </ligand>
</feature>
<feature type="binding site" evidence="1">
    <location>
        <position position="230"/>
    </location>
    <ligand>
        <name>NADPH</name>
        <dbReference type="ChEBI" id="CHEBI:57783"/>
    </ligand>
</feature>
<feature type="binding site" evidence="1">
    <location>
        <position position="231"/>
    </location>
    <ligand>
        <name>NADPH</name>
        <dbReference type="ChEBI" id="CHEBI:57783"/>
    </ligand>
</feature>
<feature type="binding site" evidence="1">
    <location>
        <position position="251"/>
    </location>
    <ligand>
        <name>NADPH</name>
        <dbReference type="ChEBI" id="CHEBI:57783"/>
    </ligand>
</feature>
<feature type="binding site" evidence="1">
    <location>
        <position position="269"/>
    </location>
    <ligand>
        <name>NADPH</name>
        <dbReference type="ChEBI" id="CHEBI:57783"/>
    </ligand>
</feature>
<feature type="binding site" evidence="1">
    <location>
        <position position="353"/>
    </location>
    <ligand>
        <name>NADPH</name>
        <dbReference type="ChEBI" id="CHEBI:57783"/>
    </ligand>
</feature>
<feature type="binding site" evidence="1">
    <location>
        <position position="355"/>
    </location>
    <ligand>
        <name>NADPH</name>
        <dbReference type="ChEBI" id="CHEBI:57783"/>
    </ligand>
</feature>
<feature type="binding site" evidence="1">
    <location>
        <position position="398"/>
    </location>
    <ligand>
        <name>NADPH</name>
        <dbReference type="ChEBI" id="CHEBI:57783"/>
    </ligand>
</feature>
<feature type="binding site" evidence="1">
    <location>
        <position position="400"/>
    </location>
    <ligand>
        <name>NADPH</name>
        <dbReference type="ChEBI" id="CHEBI:57783"/>
    </ligand>
</feature>
<feature type="splice variant" id="VSP_062517" description="In isoform B.">
    <location>
        <begin position="1"/>
        <end position="51"/>
    </location>
</feature>
<feature type="sequence conflict" description="In Ref. 3; AAL48158." evidence="6" ref="3">
    <original>Q</original>
    <variation>L</variation>
    <location>
        <position position="114"/>
    </location>
</feature>
<name>RT4I1_DROME</name>
<evidence type="ECO:0000250" key="1">
    <source>
        <dbReference type="UniProtKB" id="Q8WWV3"/>
    </source>
</evidence>
<evidence type="ECO:0000255" key="2"/>
<evidence type="ECO:0000256" key="3">
    <source>
        <dbReference type="SAM" id="MobiDB-lite"/>
    </source>
</evidence>
<evidence type="ECO:0000269" key="4">
    <source>
    </source>
</evidence>
<evidence type="ECO:0000303" key="5">
    <source>
    </source>
</evidence>
<evidence type="ECO:0000305" key="6"/>
<evidence type="ECO:0000312" key="7">
    <source>
        <dbReference type="FlyBase" id="FBgn0031500"/>
    </source>
</evidence>
<accession>Q8IPZ3</accession>
<accession>Q8SZK7</accession>
<accession>Q9VQL4</accession>
<dbReference type="EC" id="1.6.5.2" evidence="1"/>
<dbReference type="EMBL" id="AE014134">
    <property type="protein sequence ID" value="AAF51151.1"/>
    <property type="molecule type" value="Genomic_DNA"/>
</dbReference>
<dbReference type="EMBL" id="AE014134">
    <property type="protein sequence ID" value="AAF51152.2"/>
    <property type="molecule type" value="Genomic_DNA"/>
</dbReference>
<dbReference type="EMBL" id="AE014134">
    <property type="protein sequence ID" value="AGB92521.1"/>
    <property type="molecule type" value="Genomic_DNA"/>
</dbReference>
<dbReference type="EMBL" id="AY070687">
    <property type="protein sequence ID" value="AAL48158.1"/>
    <property type="molecule type" value="mRNA"/>
</dbReference>
<dbReference type="EMBL" id="BT044130">
    <property type="protein sequence ID" value="ACH92195.1"/>
    <property type="molecule type" value="mRNA"/>
</dbReference>
<dbReference type="RefSeq" id="NP_001259984.1">
    <molecule id="Q8IPZ3-1"/>
    <property type="nucleotide sequence ID" value="NM_001273055.1"/>
</dbReference>
<dbReference type="RefSeq" id="NP_608746.1">
    <molecule id="Q8IPZ3-1"/>
    <property type="nucleotide sequence ID" value="NM_134902.2"/>
</dbReference>
<dbReference type="RefSeq" id="NP_722873.1">
    <molecule id="Q8IPZ3-2"/>
    <property type="nucleotide sequence ID" value="NM_164523.2"/>
</dbReference>
<dbReference type="SMR" id="Q8IPZ3"/>
<dbReference type="FunCoup" id="Q8IPZ3">
    <property type="interactions" value="984"/>
</dbReference>
<dbReference type="IntAct" id="Q8IPZ3">
    <property type="interactions" value="2"/>
</dbReference>
<dbReference type="STRING" id="7227.FBpp0307453"/>
<dbReference type="PaxDb" id="7227-FBpp0077340"/>
<dbReference type="DNASU" id="33521"/>
<dbReference type="EnsemblMetazoa" id="FBtr0077654">
    <molecule id="Q8IPZ3-2"/>
    <property type="protein sequence ID" value="FBpp0077339"/>
    <property type="gene ID" value="FBgn0031500"/>
</dbReference>
<dbReference type="EnsemblMetazoa" id="FBtr0077655">
    <molecule id="Q8IPZ3-1"/>
    <property type="protein sequence ID" value="FBpp0077340"/>
    <property type="gene ID" value="FBgn0031500"/>
</dbReference>
<dbReference type="EnsemblMetazoa" id="FBtr0335479">
    <molecule id="Q8IPZ3-1"/>
    <property type="protein sequence ID" value="FBpp0307453"/>
    <property type="gene ID" value="FBgn0031500"/>
</dbReference>
<dbReference type="GeneID" id="33521"/>
<dbReference type="KEGG" id="dme:Dmel_CG17221"/>
<dbReference type="UCSC" id="CG17221-RA">
    <molecule id="Q8IPZ3-1"/>
    <property type="organism name" value="d. melanogaster"/>
</dbReference>
<dbReference type="AGR" id="FB:FBgn0031500"/>
<dbReference type="FlyBase" id="FBgn0031500">
    <property type="gene designation" value="Rtn4ip1"/>
</dbReference>
<dbReference type="VEuPathDB" id="VectorBase:FBgn0031500"/>
<dbReference type="eggNOG" id="KOG1198">
    <property type="taxonomic scope" value="Eukaryota"/>
</dbReference>
<dbReference type="GeneTree" id="ENSGT00880000138028"/>
<dbReference type="HOGENOM" id="CLU_026673_3_3_1"/>
<dbReference type="OMA" id="WVPGYDI"/>
<dbReference type="OrthoDB" id="2321660at2759"/>
<dbReference type="UniPathway" id="UPA00232"/>
<dbReference type="BioGRID-ORCS" id="33521">
    <property type="hits" value="0 hits in 3 CRISPR screens"/>
</dbReference>
<dbReference type="Proteomes" id="UP000000803">
    <property type="component" value="Chromosome 2L"/>
</dbReference>
<dbReference type="Bgee" id="FBgn0031500">
    <property type="expression patterns" value="Expressed in male accessory gland main cell (Drosophila) in male reproductive gland and 64 other cell types or tissues"/>
</dbReference>
<dbReference type="ExpressionAtlas" id="Q8IPZ3">
    <property type="expression patterns" value="baseline and differential"/>
</dbReference>
<dbReference type="GO" id="GO:0005759">
    <property type="term" value="C:mitochondrial matrix"/>
    <property type="evidence" value="ECO:0000250"/>
    <property type="project" value="FlyBase"/>
</dbReference>
<dbReference type="GO" id="GO:0005739">
    <property type="term" value="C:mitochondrion"/>
    <property type="evidence" value="ECO:0000318"/>
    <property type="project" value="GO_Central"/>
</dbReference>
<dbReference type="GO" id="GO:0008753">
    <property type="term" value="F:NADPH dehydrogenase (quinone) activity"/>
    <property type="evidence" value="ECO:0000250"/>
    <property type="project" value="FlyBase"/>
</dbReference>
<dbReference type="GO" id="GO:0016491">
    <property type="term" value="F:oxidoreductase activity"/>
    <property type="evidence" value="ECO:0007669"/>
    <property type="project" value="UniProtKB-KW"/>
</dbReference>
<dbReference type="GO" id="GO:0006744">
    <property type="term" value="P:ubiquinone biosynthetic process"/>
    <property type="evidence" value="ECO:0000315"/>
    <property type="project" value="FlyBase"/>
</dbReference>
<dbReference type="CDD" id="cd08248">
    <property type="entry name" value="RTN4I1"/>
    <property type="match status" value="1"/>
</dbReference>
<dbReference type="FunFam" id="3.40.50.720:FF:000147">
    <property type="entry name" value="Reticulon-4-interacting protein 1 homolog, mitochondrial"/>
    <property type="match status" value="1"/>
</dbReference>
<dbReference type="Gene3D" id="3.90.180.10">
    <property type="entry name" value="Medium-chain alcohol dehydrogenases, catalytic domain"/>
    <property type="match status" value="1"/>
</dbReference>
<dbReference type="Gene3D" id="3.40.50.720">
    <property type="entry name" value="NAD(P)-binding Rossmann-like Domain"/>
    <property type="match status" value="1"/>
</dbReference>
<dbReference type="InterPro" id="IPR013154">
    <property type="entry name" value="ADH-like_N"/>
</dbReference>
<dbReference type="InterPro" id="IPR011032">
    <property type="entry name" value="GroES-like_sf"/>
</dbReference>
<dbReference type="InterPro" id="IPR036291">
    <property type="entry name" value="NAD(P)-bd_dom_sf"/>
</dbReference>
<dbReference type="InterPro" id="IPR020843">
    <property type="entry name" value="PKS_ER"/>
</dbReference>
<dbReference type="InterPro" id="IPR037397">
    <property type="entry name" value="RTN4I1"/>
</dbReference>
<dbReference type="InterPro" id="IPR050700">
    <property type="entry name" value="YIM1/Zinc_Alcohol_DH_Fams"/>
</dbReference>
<dbReference type="PANTHER" id="PTHR11695">
    <property type="entry name" value="ALCOHOL DEHYDROGENASE RELATED"/>
    <property type="match status" value="1"/>
</dbReference>
<dbReference type="PANTHER" id="PTHR11695:SF294">
    <property type="entry name" value="RETICULON-4-INTERACTING PROTEIN 1, MITOCHONDRIAL"/>
    <property type="match status" value="1"/>
</dbReference>
<dbReference type="Pfam" id="PF08240">
    <property type="entry name" value="ADH_N"/>
    <property type="match status" value="1"/>
</dbReference>
<dbReference type="Pfam" id="PF13602">
    <property type="entry name" value="ADH_zinc_N_2"/>
    <property type="match status" value="1"/>
</dbReference>
<dbReference type="SMART" id="SM00829">
    <property type="entry name" value="PKS_ER"/>
    <property type="match status" value="1"/>
</dbReference>
<dbReference type="SUPFAM" id="SSF50129">
    <property type="entry name" value="GroES-like"/>
    <property type="match status" value="1"/>
</dbReference>
<dbReference type="SUPFAM" id="SSF51735">
    <property type="entry name" value="NAD(P)-binding Rossmann-fold domains"/>
    <property type="match status" value="1"/>
</dbReference>
<proteinExistence type="evidence at transcript level"/>
<protein>
    <recommendedName>
        <fullName evidence="6">NAD(P)H oxidoreductase RTN4IP1, mitochondrial</fullName>
        <ecNumber evidence="1">1.6.5.2</ecNumber>
    </recommendedName>
    <alternativeName>
        <fullName>Reticulon-4-interacting protein 1 homolog</fullName>
        <shortName evidence="5">dRtn4ip1</shortName>
    </alternativeName>
</protein>
<gene>
    <name evidence="7" type="primary">Rtn4ip1</name>
    <name evidence="7" type="ORF">CG17221</name>
</gene>
<sequence length="413" mass="44526">MTAAGFNSILCLRQLVRLNRRQYSAPAKSVLSGSQTNDQATPPPTSKSADKMRGWQLHNYGDIDELQLSEMLKIPQIRCSNECLVRIRATAVNPIDLAMLRGYGATVLNKMRCQPGDGIEFPLILGREFCGELVQTGMGVSLPLGSRVWGVVPLQATIGSHAEYVAVPSYCLAPAPKELDDYEAASVLYAGLTAWSGLYITGGLGGPCGATTASGGGAHKRVLVLGGSGGVGTLAIQILKSQKVQVLATCSENAIEMVRNLGADLVVDYNNPQAMEELCKYAPYDIVLDCAGQGGQKAAESKYDFRQYITFSSPLLANIDKQGLGVGALKNVFDLFQTNVRSVTQRGGLVKWGFFSPAPQGIQFLQKLVEQRKLMPLIDSSYGFSELPKAFEKMKSGHLRGKIVVKLREETGD</sequence>
<comment type="function">
    <text evidence="1 4">NAD(P)H oxidoreductase (By similarity). Involved in the ubiquinone biosynthetic pathway (PubMed:37884807).</text>
</comment>
<comment type="catalytic activity">
    <reaction evidence="1">
        <text>a quinone + NADH + H(+) = a quinol + NAD(+)</text>
        <dbReference type="Rhea" id="RHEA:46160"/>
        <dbReference type="ChEBI" id="CHEBI:15378"/>
        <dbReference type="ChEBI" id="CHEBI:24646"/>
        <dbReference type="ChEBI" id="CHEBI:57540"/>
        <dbReference type="ChEBI" id="CHEBI:57945"/>
        <dbReference type="ChEBI" id="CHEBI:132124"/>
        <dbReference type="EC" id="1.6.5.2"/>
    </reaction>
</comment>
<comment type="catalytic activity">
    <reaction evidence="1">
        <text>a quinone + NADPH + H(+) = a quinol + NADP(+)</text>
        <dbReference type="Rhea" id="RHEA:46164"/>
        <dbReference type="ChEBI" id="CHEBI:15378"/>
        <dbReference type="ChEBI" id="CHEBI:24646"/>
        <dbReference type="ChEBI" id="CHEBI:57783"/>
        <dbReference type="ChEBI" id="CHEBI:58349"/>
        <dbReference type="ChEBI" id="CHEBI:132124"/>
        <dbReference type="EC" id="1.6.5.2"/>
    </reaction>
</comment>
<comment type="pathway">
    <text evidence="4">Cofactor biosynthesis; ubiquinone biosynthesis.</text>
</comment>
<comment type="subcellular location">
    <subcellularLocation>
        <location evidence="4">Mitochondrion matrix</location>
    </subcellularLocation>
</comment>
<comment type="alternative products">
    <event type="alternative splicing"/>
    <isoform>
        <id>Q8IPZ3-1</id>
        <name>A</name>
        <sequence type="displayed"/>
    </isoform>
    <isoform>
        <id>Q8IPZ3-2</id>
        <name>B</name>
        <sequence type="described" ref="VSP_062517"/>
    </isoform>
</comment>
<comment type="disruption phenotype">
    <text evidence="4">Lethality during third-instar larvae stage due to a decreased number of ubiquinone species.</text>
</comment>
<comment type="similarity">
    <text evidence="6">Belongs to the zinc-containing alcohol dehydrogenase family. Quinone oxidoreductase subfamily.</text>
</comment>